<keyword id="KW-0903">Direct protein sequencing</keyword>
<keyword id="KW-1015">Disulfide bond</keyword>
<keyword id="KW-0379">Hydroxylation</keyword>
<keyword id="KW-0872">Ion channel impairing toxin</keyword>
<keyword id="KW-0960">Knottin</keyword>
<keyword id="KW-0528">Neurotoxin</keyword>
<keyword id="KW-0964">Secreted</keyword>
<keyword id="KW-0800">Toxin</keyword>
<keyword id="KW-0738">Voltage-gated sodium channel impairing toxin</keyword>
<protein>
    <recommendedName>
        <fullName evidence="4">Nemertide alpha-2</fullName>
    </recommendedName>
</protein>
<feature type="chain" id="PRO_0000445912" description="Nemertide alpha-2" evidence="2">
    <location>
        <begin position="1"/>
        <end position="31"/>
    </location>
</feature>
<feature type="modified residue" description="4-hydroxyproline" evidence="2">
    <location>
        <position position="28"/>
    </location>
</feature>
<feature type="modified residue" description="4-hydroxyproline" evidence="2">
    <location>
        <position position="29"/>
    </location>
</feature>
<feature type="disulfide bond" evidence="1">
    <location>
        <begin position="2"/>
        <end position="16"/>
    </location>
</feature>
<feature type="disulfide bond" evidence="1">
    <location>
        <begin position="9"/>
        <end position="20"/>
    </location>
</feature>
<feature type="disulfide bond" evidence="1">
    <location>
        <begin position="15"/>
        <end position="26"/>
    </location>
</feature>
<organism>
    <name type="scientific">Lineus longissimus</name>
    <name type="common">Bootlace worm</name>
    <name type="synonym">Ascaris longissima</name>
    <dbReference type="NCBI Taxonomy" id="88925"/>
    <lineage>
        <taxon>Eukaryota</taxon>
        <taxon>Metazoa</taxon>
        <taxon>Spiralia</taxon>
        <taxon>Lophotrochozoa</taxon>
        <taxon>Nemertea</taxon>
        <taxon>Pilidiophora</taxon>
        <taxon>Heteronemertea</taxon>
        <taxon>Lineidae</taxon>
        <taxon>Lineus</taxon>
    </lineage>
</organism>
<comment type="function">
    <text evidence="1 3">Toxin with similar potency against both insect and mammalian sodium channels (Nav) (PubMed:34445875). Delays the inactivation of most Nav channels tested (B.germanica (BgNav1); EC(50)=87.2 nM, human Nav1.1/SCN1A; EC(50)=125.8 nM, rat Nav1.2/SCN2A; EC(50)=97.9 nM, rat Nav1.3/SCN3A; EC(50)=127.7 nM, rat Nav1.4/SCN4A; EC(50)=1150.3 nM, human Nav1.5/SCN5A; EC(50)=149.2 nM, mouse Nav1.6/SCN8A; EC(50)=1361.8 nM, human Nav1.9/SCN9A; EC(50)=1296.7 nM) (PubMed:34445875). Inactivation is completely prevented by a concentration of 1 uM, resulting in sustained, non-inactivating current (By similarity). In addition, the toxin significantly enhances the recovery from inactivation, and the open state is not required for the toxin to interact with the channel (By similarity). In vivo, injection into brine shrimp (Artemia salina) stops movement or causes death after 24 hours (EC(50)=2.9 uM) (PubMed:34445875).</text>
</comment>
<comment type="subcellular location">
    <subcellularLocation>
        <location evidence="6">Secreted</location>
    </subcellularLocation>
</comment>
<comment type="tissue specificity">
    <text evidence="2">Confined to the epidermis and to the mucus layer.</text>
</comment>
<comment type="domain">
    <text evidence="6">The presence of a 'disulfide through disulfide knot' structurally defines this protein as a knottin.</text>
</comment>
<comment type="mass spectrometry"/>
<comment type="miscellaneous">
    <text evidence="3">Negative results: does not show effect on rat Nav1.8/SCN10A.</text>
</comment>
<comment type="similarity">
    <text evidence="5">Belongs to the nemertide family.</text>
</comment>
<reference key="1">
    <citation type="journal article" date="2018" name="Sci. Rep.">
        <title>Peptide ion channel toxins from the bootlace worm, the longest animal on Earth.</title>
        <authorList>
            <person name="Jacobsson E."/>
            <person name="Andersson H.S."/>
            <person name="Strand M."/>
            <person name="Peigneur S."/>
            <person name="Eriksson C."/>
            <person name="Loden H."/>
            <person name="Shariatgorji M."/>
            <person name="Andren P.E."/>
            <person name="Lebbe E.K.M."/>
            <person name="Rosengren K.J."/>
            <person name="Tytgat J."/>
            <person name="Goeransson U."/>
        </authorList>
    </citation>
    <scope>PROTEIN SEQUENCE</scope>
    <scope>MASS SPECTROMETRY</scope>
    <scope>HYDROXYLATION AT PRO-28 AND PRO-29</scope>
</reference>
<reference key="2">
    <citation type="journal article" date="2021" name="J. Nat. Prod.">
        <title>Functional characterization of the nemertide alpha family of peptide toxins.</title>
        <authorList>
            <person name="Jacobsson E."/>
            <person name="Peigneur S."/>
            <person name="Andersson H.S."/>
            <person name="Laborde Q."/>
            <person name="Strand M."/>
            <person name="Tytgat J."/>
            <person name="Goeransson U."/>
        </authorList>
    </citation>
    <scope>NUCLEOTIDE SEQUENCE [MRNA]</scope>
    <scope>SYNTHESIS</scope>
    <scope>FUNCTION</scope>
    <scope>BIOASSAY</scope>
</reference>
<sequence>GCIATGSVCTLSKGCCTKNCGWNFKCNPPNQ</sequence>
<evidence type="ECO:0000250" key="1">
    <source>
        <dbReference type="UniProtKB" id="P0DM24"/>
    </source>
</evidence>
<evidence type="ECO:0000269" key="2">
    <source>
    </source>
</evidence>
<evidence type="ECO:0000269" key="3">
    <source>
    </source>
</evidence>
<evidence type="ECO:0000303" key="4">
    <source>
    </source>
</evidence>
<evidence type="ECO:0000305" key="5"/>
<evidence type="ECO:0000305" key="6">
    <source>
    </source>
</evidence>
<accession>P0DM25</accession>
<dbReference type="SMR" id="P0DM25"/>
<dbReference type="GO" id="GO:0005576">
    <property type="term" value="C:extracellular region"/>
    <property type="evidence" value="ECO:0007669"/>
    <property type="project" value="UniProtKB-SubCell"/>
</dbReference>
<dbReference type="GO" id="GO:0017080">
    <property type="term" value="F:sodium channel regulator activity"/>
    <property type="evidence" value="ECO:0007669"/>
    <property type="project" value="UniProtKB-KW"/>
</dbReference>
<dbReference type="GO" id="GO:0090729">
    <property type="term" value="F:toxin activity"/>
    <property type="evidence" value="ECO:0007669"/>
    <property type="project" value="UniProtKB-KW"/>
</dbReference>
<dbReference type="PROSITE" id="PS60004">
    <property type="entry name" value="OMEGA_CONOTOXIN"/>
    <property type="match status" value="1"/>
</dbReference>
<proteinExistence type="evidence at protein level"/>
<name>NEMA2_LINLO</name>